<name>PVK1_ENTSB</name>
<reference evidence="6" key="1">
    <citation type="journal article" date="2010" name="Peptides">
        <title>CAPA-peptides of praying mantids (Mantodea).</title>
        <authorList>
            <person name="Koehler R."/>
            <person name="Predel R."/>
        </authorList>
    </citation>
    <scope>PROTEIN SEQUENCE</scope>
    <scope>MASS SPECTROMETRY</scope>
    <scope>PYROGLUTAMATE FORMATION AT GLN-1</scope>
    <scope>AMIDATION AT VAL-9</scope>
    <source>
        <tissue evidence="4">Abdominal perisympathetic organs</tissue>
    </source>
</reference>
<comment type="function">
    <text evidence="1">Mediates visceral muscle contractile activity (myotropic activity).</text>
</comment>
<comment type="subcellular location">
    <subcellularLocation>
        <location evidence="2">Secreted</location>
    </subcellularLocation>
</comment>
<comment type="mass spectrometry"/>
<comment type="mass spectrometry">
    <text>With pyroglutamate at Gln-1.</text>
</comment>
<comment type="similarity">
    <text evidence="3">Belongs to the periviscerokinin family.</text>
</comment>
<organism>
    <name type="scientific">Entella sp. (strain Beaufort-W)</name>
    <name type="common">Praying mantis</name>
    <dbReference type="NCBI Taxonomy" id="761655"/>
    <lineage>
        <taxon>Eukaryota</taxon>
        <taxon>Metazoa</taxon>
        <taxon>Ecdysozoa</taxon>
        <taxon>Arthropoda</taxon>
        <taxon>Hexapoda</taxon>
        <taxon>Insecta</taxon>
        <taxon>Pterygota</taxon>
        <taxon>Neoptera</taxon>
        <taxon>Polyneoptera</taxon>
        <taxon>Dictyoptera</taxon>
        <taxon>Mantodea</taxon>
        <taxon>Eumantodea</taxon>
        <taxon>Chroicopteroidea</taxon>
        <taxon>Chroicopteridae</taxon>
        <taxon>Chroicopterinae</taxon>
        <taxon>Entella</taxon>
    </lineage>
</organism>
<dbReference type="GO" id="GO:0005576">
    <property type="term" value="C:extracellular region"/>
    <property type="evidence" value="ECO:0007669"/>
    <property type="project" value="UniProtKB-SubCell"/>
</dbReference>
<dbReference type="GO" id="GO:0007218">
    <property type="term" value="P:neuropeptide signaling pathway"/>
    <property type="evidence" value="ECO:0007669"/>
    <property type="project" value="UniProtKB-KW"/>
</dbReference>
<dbReference type="InterPro" id="IPR013231">
    <property type="entry name" value="Periviscerokinin"/>
</dbReference>
<dbReference type="Pfam" id="PF08259">
    <property type="entry name" value="Periviscerokin"/>
    <property type="match status" value="1"/>
</dbReference>
<evidence type="ECO:0000250" key="1">
    <source>
        <dbReference type="UniProtKB" id="P83923"/>
    </source>
</evidence>
<evidence type="ECO:0000250" key="2">
    <source>
        <dbReference type="UniProtKB" id="P84375"/>
    </source>
</evidence>
<evidence type="ECO:0000255" key="3"/>
<evidence type="ECO:0000269" key="4">
    <source>
    </source>
</evidence>
<evidence type="ECO:0000303" key="5">
    <source>
    </source>
</evidence>
<evidence type="ECO:0000305" key="6"/>
<feature type="peptide" id="PRO_0000395566" description="Periviscerokinin-1" evidence="4">
    <location>
        <begin position="1"/>
        <end position="9"/>
    </location>
</feature>
<feature type="modified residue" description="Pyrrolidone carboxylic acid; partial" evidence="4">
    <location>
        <position position="1"/>
    </location>
</feature>
<feature type="modified residue" description="Valine amide" evidence="4">
    <location>
        <position position="9"/>
    </location>
</feature>
<feature type="unsure residue" description="L or I" evidence="4">
    <location>
        <position position="3"/>
    </location>
</feature>
<feature type="unsure residue" description="I or L" evidence="4">
    <location>
        <position position="4"/>
    </location>
</feature>
<proteinExistence type="evidence at protein level"/>
<keyword id="KW-0027">Amidation</keyword>
<keyword id="KW-0903">Direct protein sequencing</keyword>
<keyword id="KW-0527">Neuropeptide</keyword>
<keyword id="KW-0873">Pyrrolidone carboxylic acid</keyword>
<keyword id="KW-0964">Secreted</keyword>
<sequence>QGLIAFPRV</sequence>
<protein>
    <recommendedName>
        <fullName evidence="5">Periviscerokinin-1</fullName>
        <shortName evidence="5">Entsp-PVK-1</shortName>
    </recommendedName>
</protein>
<accession>P86677</accession>